<dbReference type="EMBL" id="CR522870">
    <property type="protein sequence ID" value="CAG37321.1"/>
    <property type="molecule type" value="Genomic_DNA"/>
</dbReference>
<dbReference type="RefSeq" id="WP_011189833.1">
    <property type="nucleotide sequence ID" value="NC_006138.1"/>
</dbReference>
<dbReference type="SMR" id="Q6AK05"/>
<dbReference type="STRING" id="177439.DP2592"/>
<dbReference type="KEGG" id="dps:DP2592"/>
<dbReference type="eggNOG" id="COG0261">
    <property type="taxonomic scope" value="Bacteria"/>
</dbReference>
<dbReference type="HOGENOM" id="CLU_061463_3_2_7"/>
<dbReference type="OrthoDB" id="9813334at2"/>
<dbReference type="Proteomes" id="UP000000602">
    <property type="component" value="Chromosome"/>
</dbReference>
<dbReference type="GO" id="GO:0005737">
    <property type="term" value="C:cytoplasm"/>
    <property type="evidence" value="ECO:0007669"/>
    <property type="project" value="UniProtKB-ARBA"/>
</dbReference>
<dbReference type="GO" id="GO:1990904">
    <property type="term" value="C:ribonucleoprotein complex"/>
    <property type="evidence" value="ECO:0007669"/>
    <property type="project" value="UniProtKB-KW"/>
</dbReference>
<dbReference type="GO" id="GO:0005840">
    <property type="term" value="C:ribosome"/>
    <property type="evidence" value="ECO:0007669"/>
    <property type="project" value="UniProtKB-KW"/>
</dbReference>
<dbReference type="GO" id="GO:0019843">
    <property type="term" value="F:rRNA binding"/>
    <property type="evidence" value="ECO:0007669"/>
    <property type="project" value="UniProtKB-UniRule"/>
</dbReference>
<dbReference type="GO" id="GO:0003735">
    <property type="term" value="F:structural constituent of ribosome"/>
    <property type="evidence" value="ECO:0007669"/>
    <property type="project" value="InterPro"/>
</dbReference>
<dbReference type="GO" id="GO:0006412">
    <property type="term" value="P:translation"/>
    <property type="evidence" value="ECO:0007669"/>
    <property type="project" value="UniProtKB-UniRule"/>
</dbReference>
<dbReference type="HAMAP" id="MF_01363">
    <property type="entry name" value="Ribosomal_bL21"/>
    <property type="match status" value="1"/>
</dbReference>
<dbReference type="InterPro" id="IPR028909">
    <property type="entry name" value="bL21-like"/>
</dbReference>
<dbReference type="InterPro" id="IPR036164">
    <property type="entry name" value="bL21-like_sf"/>
</dbReference>
<dbReference type="InterPro" id="IPR001787">
    <property type="entry name" value="Ribosomal_bL21"/>
</dbReference>
<dbReference type="InterPro" id="IPR018258">
    <property type="entry name" value="Ribosomal_bL21_CS"/>
</dbReference>
<dbReference type="NCBIfam" id="TIGR00061">
    <property type="entry name" value="L21"/>
    <property type="match status" value="1"/>
</dbReference>
<dbReference type="PANTHER" id="PTHR21349">
    <property type="entry name" value="50S RIBOSOMAL PROTEIN L21"/>
    <property type="match status" value="1"/>
</dbReference>
<dbReference type="PANTHER" id="PTHR21349:SF0">
    <property type="entry name" value="LARGE RIBOSOMAL SUBUNIT PROTEIN BL21M"/>
    <property type="match status" value="1"/>
</dbReference>
<dbReference type="Pfam" id="PF00829">
    <property type="entry name" value="Ribosomal_L21p"/>
    <property type="match status" value="1"/>
</dbReference>
<dbReference type="SUPFAM" id="SSF141091">
    <property type="entry name" value="L21p-like"/>
    <property type="match status" value="1"/>
</dbReference>
<dbReference type="PROSITE" id="PS01169">
    <property type="entry name" value="RIBOSOMAL_L21"/>
    <property type="match status" value="1"/>
</dbReference>
<proteinExistence type="inferred from homology"/>
<organism>
    <name type="scientific">Desulfotalea psychrophila (strain LSv54 / DSM 12343)</name>
    <dbReference type="NCBI Taxonomy" id="177439"/>
    <lineage>
        <taxon>Bacteria</taxon>
        <taxon>Pseudomonadati</taxon>
        <taxon>Thermodesulfobacteriota</taxon>
        <taxon>Desulfobulbia</taxon>
        <taxon>Desulfobulbales</taxon>
        <taxon>Desulfocapsaceae</taxon>
        <taxon>Desulfotalea</taxon>
    </lineage>
</organism>
<keyword id="KW-1185">Reference proteome</keyword>
<keyword id="KW-0687">Ribonucleoprotein</keyword>
<keyword id="KW-0689">Ribosomal protein</keyword>
<keyword id="KW-0694">RNA-binding</keyword>
<keyword id="KW-0699">rRNA-binding</keyword>
<accession>Q6AK05</accession>
<comment type="function">
    <text evidence="1">This protein binds to 23S rRNA in the presence of protein L20.</text>
</comment>
<comment type="subunit">
    <text evidence="1">Part of the 50S ribosomal subunit. Contacts protein L20.</text>
</comment>
<comment type="similarity">
    <text evidence="1">Belongs to the bacterial ribosomal protein bL21 family.</text>
</comment>
<gene>
    <name evidence="1" type="primary">rplU</name>
    <name type="ordered locus">DP2592</name>
</gene>
<feature type="chain" id="PRO_0000269312" description="Large ribosomal subunit protein bL21">
    <location>
        <begin position="1"/>
        <end position="103"/>
    </location>
</feature>
<reference key="1">
    <citation type="journal article" date="2004" name="Environ. Microbiol.">
        <title>The genome of Desulfotalea psychrophila, a sulfate-reducing bacterium from permanently cold Arctic sediments.</title>
        <authorList>
            <person name="Rabus R."/>
            <person name="Ruepp A."/>
            <person name="Frickey T."/>
            <person name="Rattei T."/>
            <person name="Fartmann B."/>
            <person name="Stark M."/>
            <person name="Bauer M."/>
            <person name="Zibat A."/>
            <person name="Lombardot T."/>
            <person name="Becker I."/>
            <person name="Amann J."/>
            <person name="Gellner K."/>
            <person name="Teeling H."/>
            <person name="Leuschner W.D."/>
            <person name="Gloeckner F.-O."/>
            <person name="Lupas A.N."/>
            <person name="Amann R."/>
            <person name="Klenk H.-P."/>
        </authorList>
    </citation>
    <scope>NUCLEOTIDE SEQUENCE [LARGE SCALE GENOMIC DNA]</scope>
    <source>
        <strain>DSM 12343 / LSv54</strain>
    </source>
</reference>
<sequence>MYAIVRTGGKQYQVACGDQLRVEKLEGNVGDSLDLTDVLMLVDGDNVQVGQPVLENAKVVAKIAEQGRGKKIIIFKKKRRKGYRLKQGHRQSYTALKIEEISA</sequence>
<evidence type="ECO:0000255" key="1">
    <source>
        <dbReference type="HAMAP-Rule" id="MF_01363"/>
    </source>
</evidence>
<evidence type="ECO:0000305" key="2"/>
<name>RL21_DESPS</name>
<protein>
    <recommendedName>
        <fullName evidence="1">Large ribosomal subunit protein bL21</fullName>
    </recommendedName>
    <alternativeName>
        <fullName evidence="2">50S ribosomal protein L21</fullName>
    </alternativeName>
</protein>